<sequence>MKVILNEDVKYLGEEGDIKNVAKGYARNYLFPRNLAVPCNEFTLAHFESRKEEIEAKKAAKRQDAAGLKEKLEALSIKILMPAGPNGKLYGAVTTQTLFDELQKLNFDIERKRIEILGQTVKSTGVHKAIVKLYENTSAEISFTVEAQIAEEKPVKASEKKGRRPRRDEEASDEQILAEENSVTEEAVSEEIQNSESEN</sequence>
<dbReference type="EMBL" id="AE017226">
    <property type="protein sequence ID" value="AAS12191.1"/>
    <property type="molecule type" value="Genomic_DNA"/>
</dbReference>
<dbReference type="RefSeq" id="NP_972280.1">
    <property type="nucleotide sequence ID" value="NC_002967.9"/>
</dbReference>
<dbReference type="RefSeq" id="WP_002679371.1">
    <property type="nucleotide sequence ID" value="NC_002967.9"/>
</dbReference>
<dbReference type="SMR" id="Q73M35"/>
<dbReference type="STRING" id="243275.TDE_1675"/>
<dbReference type="PaxDb" id="243275-TDE_1675"/>
<dbReference type="GeneID" id="2740130"/>
<dbReference type="KEGG" id="tde:TDE_1675"/>
<dbReference type="PATRIC" id="fig|243275.7.peg.1601"/>
<dbReference type="eggNOG" id="COG0359">
    <property type="taxonomic scope" value="Bacteria"/>
</dbReference>
<dbReference type="HOGENOM" id="CLU_078938_1_2_12"/>
<dbReference type="OrthoDB" id="9788336at2"/>
<dbReference type="Proteomes" id="UP000008212">
    <property type="component" value="Chromosome"/>
</dbReference>
<dbReference type="GO" id="GO:1990904">
    <property type="term" value="C:ribonucleoprotein complex"/>
    <property type="evidence" value="ECO:0007669"/>
    <property type="project" value="UniProtKB-KW"/>
</dbReference>
<dbReference type="GO" id="GO:0005840">
    <property type="term" value="C:ribosome"/>
    <property type="evidence" value="ECO:0007669"/>
    <property type="project" value="UniProtKB-KW"/>
</dbReference>
<dbReference type="GO" id="GO:0019843">
    <property type="term" value="F:rRNA binding"/>
    <property type="evidence" value="ECO:0007669"/>
    <property type="project" value="UniProtKB-UniRule"/>
</dbReference>
<dbReference type="GO" id="GO:0003735">
    <property type="term" value="F:structural constituent of ribosome"/>
    <property type="evidence" value="ECO:0007669"/>
    <property type="project" value="InterPro"/>
</dbReference>
<dbReference type="GO" id="GO:0006412">
    <property type="term" value="P:translation"/>
    <property type="evidence" value="ECO:0007669"/>
    <property type="project" value="UniProtKB-UniRule"/>
</dbReference>
<dbReference type="Gene3D" id="3.10.430.100">
    <property type="entry name" value="Ribosomal protein L9, C-terminal domain"/>
    <property type="match status" value="1"/>
</dbReference>
<dbReference type="Gene3D" id="3.40.5.10">
    <property type="entry name" value="Ribosomal protein L9, N-terminal domain"/>
    <property type="match status" value="1"/>
</dbReference>
<dbReference type="HAMAP" id="MF_00503">
    <property type="entry name" value="Ribosomal_bL9"/>
    <property type="match status" value="1"/>
</dbReference>
<dbReference type="InterPro" id="IPR000244">
    <property type="entry name" value="Ribosomal_bL9"/>
</dbReference>
<dbReference type="InterPro" id="IPR009027">
    <property type="entry name" value="Ribosomal_bL9/RNase_H1_N"/>
</dbReference>
<dbReference type="InterPro" id="IPR020594">
    <property type="entry name" value="Ribosomal_bL9_bac/chp"/>
</dbReference>
<dbReference type="InterPro" id="IPR020069">
    <property type="entry name" value="Ribosomal_bL9_C"/>
</dbReference>
<dbReference type="InterPro" id="IPR036791">
    <property type="entry name" value="Ribosomal_bL9_C_sf"/>
</dbReference>
<dbReference type="InterPro" id="IPR020070">
    <property type="entry name" value="Ribosomal_bL9_N"/>
</dbReference>
<dbReference type="InterPro" id="IPR036935">
    <property type="entry name" value="Ribosomal_bL9_N_sf"/>
</dbReference>
<dbReference type="NCBIfam" id="TIGR00158">
    <property type="entry name" value="L9"/>
    <property type="match status" value="1"/>
</dbReference>
<dbReference type="PANTHER" id="PTHR21368">
    <property type="entry name" value="50S RIBOSOMAL PROTEIN L9"/>
    <property type="match status" value="1"/>
</dbReference>
<dbReference type="Pfam" id="PF03948">
    <property type="entry name" value="Ribosomal_L9_C"/>
    <property type="match status" value="1"/>
</dbReference>
<dbReference type="Pfam" id="PF01281">
    <property type="entry name" value="Ribosomal_L9_N"/>
    <property type="match status" value="1"/>
</dbReference>
<dbReference type="SUPFAM" id="SSF55658">
    <property type="entry name" value="L9 N-domain-like"/>
    <property type="match status" value="1"/>
</dbReference>
<dbReference type="SUPFAM" id="SSF55653">
    <property type="entry name" value="Ribosomal protein L9 C-domain"/>
    <property type="match status" value="1"/>
</dbReference>
<dbReference type="PROSITE" id="PS00651">
    <property type="entry name" value="RIBOSOMAL_L9"/>
    <property type="match status" value="1"/>
</dbReference>
<keyword id="KW-1185">Reference proteome</keyword>
<keyword id="KW-0687">Ribonucleoprotein</keyword>
<keyword id="KW-0689">Ribosomal protein</keyword>
<keyword id="KW-0694">RNA-binding</keyword>
<keyword id="KW-0699">rRNA-binding</keyword>
<gene>
    <name evidence="1" type="primary">rplI</name>
    <name type="ordered locus">TDE_1675</name>
</gene>
<evidence type="ECO:0000255" key="1">
    <source>
        <dbReference type="HAMAP-Rule" id="MF_00503"/>
    </source>
</evidence>
<evidence type="ECO:0000256" key="2">
    <source>
        <dbReference type="SAM" id="MobiDB-lite"/>
    </source>
</evidence>
<evidence type="ECO:0000305" key="3"/>
<organism>
    <name type="scientific">Treponema denticola (strain ATCC 35405 / DSM 14222 / CIP 103919 / JCM 8153 / KCTC 15104)</name>
    <dbReference type="NCBI Taxonomy" id="243275"/>
    <lineage>
        <taxon>Bacteria</taxon>
        <taxon>Pseudomonadati</taxon>
        <taxon>Spirochaetota</taxon>
        <taxon>Spirochaetia</taxon>
        <taxon>Spirochaetales</taxon>
        <taxon>Treponemataceae</taxon>
        <taxon>Treponema</taxon>
    </lineage>
</organism>
<proteinExistence type="inferred from homology"/>
<comment type="function">
    <text evidence="1">Binds to the 23S rRNA.</text>
</comment>
<comment type="similarity">
    <text evidence="1">Belongs to the bacterial ribosomal protein bL9 family.</text>
</comment>
<name>RL9_TREDE</name>
<reference key="1">
    <citation type="journal article" date="2004" name="Proc. Natl. Acad. Sci. U.S.A.">
        <title>Comparison of the genome of the oral pathogen Treponema denticola with other spirochete genomes.</title>
        <authorList>
            <person name="Seshadri R."/>
            <person name="Myers G.S.A."/>
            <person name="Tettelin H."/>
            <person name="Eisen J.A."/>
            <person name="Heidelberg J.F."/>
            <person name="Dodson R.J."/>
            <person name="Davidsen T.M."/>
            <person name="DeBoy R.T."/>
            <person name="Fouts D.E."/>
            <person name="Haft D.H."/>
            <person name="Selengut J."/>
            <person name="Ren Q."/>
            <person name="Brinkac L.M."/>
            <person name="Madupu R."/>
            <person name="Kolonay J.F."/>
            <person name="Durkin S.A."/>
            <person name="Daugherty S.C."/>
            <person name="Shetty J."/>
            <person name="Shvartsbeyn A."/>
            <person name="Gebregeorgis E."/>
            <person name="Geer K."/>
            <person name="Tsegaye G."/>
            <person name="Malek J.A."/>
            <person name="Ayodeji B."/>
            <person name="Shatsman S."/>
            <person name="McLeod M.P."/>
            <person name="Smajs D."/>
            <person name="Howell J.K."/>
            <person name="Pal S."/>
            <person name="Amin A."/>
            <person name="Vashisth P."/>
            <person name="McNeill T.Z."/>
            <person name="Xiang Q."/>
            <person name="Sodergren E."/>
            <person name="Baca E."/>
            <person name="Weinstock G.M."/>
            <person name="Norris S.J."/>
            <person name="Fraser C.M."/>
            <person name="Paulsen I.T."/>
        </authorList>
    </citation>
    <scope>NUCLEOTIDE SEQUENCE [LARGE SCALE GENOMIC DNA]</scope>
    <source>
        <strain>ATCC 35405 / DSM 14222 / CIP 103919 / JCM 8153 / KCTC 15104</strain>
    </source>
</reference>
<feature type="chain" id="PRO_0000236614" description="Large ribosomal subunit protein bL9">
    <location>
        <begin position="1"/>
        <end position="199"/>
    </location>
</feature>
<feature type="region of interest" description="Disordered" evidence="2">
    <location>
        <begin position="153"/>
        <end position="199"/>
    </location>
</feature>
<accession>Q73M35</accession>
<protein>
    <recommendedName>
        <fullName evidence="1">Large ribosomal subunit protein bL9</fullName>
    </recommendedName>
    <alternativeName>
        <fullName evidence="3">50S ribosomal protein L9</fullName>
    </alternativeName>
</protein>